<dbReference type="EMBL" id="AE017197">
    <property type="protein sequence ID" value="AAU03584.1"/>
    <property type="molecule type" value="Genomic_DNA"/>
</dbReference>
<dbReference type="RefSeq" id="WP_011190571.1">
    <property type="nucleotide sequence ID" value="NC_006142.1"/>
</dbReference>
<dbReference type="SMR" id="Q68XQ8"/>
<dbReference type="DNASU" id="2958555"/>
<dbReference type="KEGG" id="rty:RT0098"/>
<dbReference type="eggNOG" id="COG1678">
    <property type="taxonomic scope" value="Bacteria"/>
</dbReference>
<dbReference type="HOGENOM" id="CLU_057596_1_0_5"/>
<dbReference type="OrthoDB" id="9807486at2"/>
<dbReference type="Proteomes" id="UP000000604">
    <property type="component" value="Chromosome"/>
</dbReference>
<dbReference type="GO" id="GO:0005829">
    <property type="term" value="C:cytosol"/>
    <property type="evidence" value="ECO:0007669"/>
    <property type="project" value="TreeGrafter"/>
</dbReference>
<dbReference type="Gene3D" id="3.40.1740.10">
    <property type="entry name" value="VC0467-like"/>
    <property type="match status" value="1"/>
</dbReference>
<dbReference type="HAMAP" id="MF_00758">
    <property type="entry name" value="UPF0301"/>
    <property type="match status" value="1"/>
</dbReference>
<dbReference type="InterPro" id="IPR003774">
    <property type="entry name" value="AlgH-like"/>
</dbReference>
<dbReference type="NCBIfam" id="NF001268">
    <property type="entry name" value="PRK00228.1-4"/>
    <property type="match status" value="1"/>
</dbReference>
<dbReference type="PANTHER" id="PTHR30327">
    <property type="entry name" value="UNCHARACTERIZED PROTEIN YQGE"/>
    <property type="match status" value="1"/>
</dbReference>
<dbReference type="PANTHER" id="PTHR30327:SF1">
    <property type="entry name" value="UPF0301 PROTEIN YQGE"/>
    <property type="match status" value="1"/>
</dbReference>
<dbReference type="Pfam" id="PF02622">
    <property type="entry name" value="DUF179"/>
    <property type="match status" value="1"/>
</dbReference>
<dbReference type="SUPFAM" id="SSF143456">
    <property type="entry name" value="VC0467-like"/>
    <property type="match status" value="1"/>
</dbReference>
<sequence length="189" mass="21619">MCDKIFHNLSGKTLVATPYVITKGIYHKSLIYMLSHTEEGAIGLIFNRLVNHVDLKSFFKIKEDKITSQVIVPIYLGGPIEHEKGFFLHSRDYNKNLLLDFHNDLAVSSNLEISEDIAFGQGPKNSLFIVGYTAWKPGQLEEELEKNLWLVMDCNKEFIFADNPENKWHNALKHLGIDEMYFSSQIGNA</sequence>
<comment type="similarity">
    <text evidence="1">Belongs to the UPF0301 (AlgH) family.</text>
</comment>
<organism>
    <name type="scientific">Rickettsia typhi (strain ATCC VR-144 / Wilmington)</name>
    <dbReference type="NCBI Taxonomy" id="257363"/>
    <lineage>
        <taxon>Bacteria</taxon>
        <taxon>Pseudomonadati</taxon>
        <taxon>Pseudomonadota</taxon>
        <taxon>Alphaproteobacteria</taxon>
        <taxon>Rickettsiales</taxon>
        <taxon>Rickettsiaceae</taxon>
        <taxon>Rickettsieae</taxon>
        <taxon>Rickettsia</taxon>
        <taxon>typhus group</taxon>
    </lineage>
</organism>
<reference key="1">
    <citation type="journal article" date="2004" name="J. Bacteriol.">
        <title>Complete genome sequence of Rickettsia typhi and comparison with sequences of other Rickettsiae.</title>
        <authorList>
            <person name="McLeod M.P."/>
            <person name="Qin X."/>
            <person name="Karpathy S.E."/>
            <person name="Gioia J."/>
            <person name="Highlander S.K."/>
            <person name="Fox G.E."/>
            <person name="McNeill T.Z."/>
            <person name="Jiang H."/>
            <person name="Muzny D."/>
            <person name="Jacob L.S."/>
            <person name="Hawes A.C."/>
            <person name="Sodergren E."/>
            <person name="Gill R."/>
            <person name="Hume J."/>
            <person name="Morgan M."/>
            <person name="Fan G."/>
            <person name="Amin A.G."/>
            <person name="Gibbs R.A."/>
            <person name="Hong C."/>
            <person name="Yu X.-J."/>
            <person name="Walker D.H."/>
            <person name="Weinstock G.M."/>
        </authorList>
    </citation>
    <scope>NUCLEOTIDE SEQUENCE [LARGE SCALE GENOMIC DNA]</scope>
    <source>
        <strain>ATCC VR-144 / Wilmington</strain>
    </source>
</reference>
<accession>Q68XQ8</accession>
<evidence type="ECO:0000255" key="1">
    <source>
        <dbReference type="HAMAP-Rule" id="MF_00758"/>
    </source>
</evidence>
<name>Y098_RICTY</name>
<protein>
    <recommendedName>
        <fullName evidence="1">UPF0301 protein RT0098</fullName>
    </recommendedName>
</protein>
<gene>
    <name type="ordered locus">RT0098</name>
</gene>
<proteinExistence type="inferred from homology"/>
<feature type="chain" id="PRO_0000258875" description="UPF0301 protein RT0098">
    <location>
        <begin position="1"/>
        <end position="189"/>
    </location>
</feature>